<evidence type="ECO:0000255" key="1">
    <source>
        <dbReference type="HAMAP-Rule" id="MF_01310"/>
    </source>
</evidence>
<evidence type="ECO:0000305" key="2"/>
<comment type="function">
    <text evidence="1">Located on the platform of the 30S subunit, it bridges several disparate RNA helices of the 16S rRNA. Forms part of the Shine-Dalgarno cleft in the 70S ribosome.</text>
</comment>
<comment type="subunit">
    <text evidence="1">Part of the 30S ribosomal subunit. Interacts with proteins S7 and S18. Binds to IF-3.</text>
</comment>
<comment type="similarity">
    <text evidence="1">Belongs to the universal ribosomal protein uS11 family.</text>
</comment>
<proteinExistence type="inferred from homology"/>
<sequence>MSAKLSTNSKKKIKRNIGEGNVYIQATFNNTIVTVSDIKGNALAWASAGGMGFKGAKKSTPYAAQITAESALNKVRDFGINYVHVYIKGPGIGRESAIRAIGSIGMTVKSISDITPIPHNGCRPKKTRRV</sequence>
<feature type="chain" id="PRO_1000141058" description="Small ribosomal subunit protein uS11">
    <location>
        <begin position="1"/>
        <end position="130"/>
    </location>
</feature>
<reference key="1">
    <citation type="journal article" date="2011" name="J. Bacteriol.">
        <title>Whole-genome sequences of thirteen isolates of Borrelia burgdorferi.</title>
        <authorList>
            <person name="Schutzer S.E."/>
            <person name="Fraser-Liggett C.M."/>
            <person name="Casjens S.R."/>
            <person name="Qiu W.G."/>
            <person name="Dunn J.J."/>
            <person name="Mongodin E.F."/>
            <person name="Luft B.J."/>
        </authorList>
    </citation>
    <scope>NUCLEOTIDE SEQUENCE [LARGE SCALE GENOMIC DNA]</scope>
    <source>
        <strain>ZS7</strain>
    </source>
</reference>
<accession>B7J266</accession>
<gene>
    <name evidence="1" type="primary">rpsK</name>
    <name type="ordered locus">BbuZS7_0512</name>
</gene>
<protein>
    <recommendedName>
        <fullName evidence="1">Small ribosomal subunit protein uS11</fullName>
    </recommendedName>
    <alternativeName>
        <fullName evidence="2">30S ribosomal protein S11</fullName>
    </alternativeName>
</protein>
<keyword id="KW-0687">Ribonucleoprotein</keyword>
<keyword id="KW-0689">Ribosomal protein</keyword>
<keyword id="KW-0694">RNA-binding</keyword>
<keyword id="KW-0699">rRNA-binding</keyword>
<organism>
    <name type="scientific">Borreliella burgdorferi (strain ZS7)</name>
    <name type="common">Borrelia burgdorferi</name>
    <dbReference type="NCBI Taxonomy" id="445985"/>
    <lineage>
        <taxon>Bacteria</taxon>
        <taxon>Pseudomonadati</taxon>
        <taxon>Spirochaetota</taxon>
        <taxon>Spirochaetia</taxon>
        <taxon>Spirochaetales</taxon>
        <taxon>Borreliaceae</taxon>
        <taxon>Borreliella</taxon>
    </lineage>
</organism>
<dbReference type="EMBL" id="CP001205">
    <property type="protein sequence ID" value="ACK74572.1"/>
    <property type="molecule type" value="Genomic_DNA"/>
</dbReference>
<dbReference type="RefSeq" id="WP_002557092.1">
    <property type="nucleotide sequence ID" value="NC_011728.1"/>
</dbReference>
<dbReference type="SMR" id="B7J266"/>
<dbReference type="GeneID" id="83865976"/>
<dbReference type="KEGG" id="bbz:BbuZS7_0512"/>
<dbReference type="HOGENOM" id="CLU_072439_5_0_12"/>
<dbReference type="Proteomes" id="UP000006901">
    <property type="component" value="Chromosome"/>
</dbReference>
<dbReference type="GO" id="GO:1990904">
    <property type="term" value="C:ribonucleoprotein complex"/>
    <property type="evidence" value="ECO:0007669"/>
    <property type="project" value="UniProtKB-KW"/>
</dbReference>
<dbReference type="GO" id="GO:0005840">
    <property type="term" value="C:ribosome"/>
    <property type="evidence" value="ECO:0007669"/>
    <property type="project" value="UniProtKB-KW"/>
</dbReference>
<dbReference type="GO" id="GO:0019843">
    <property type="term" value="F:rRNA binding"/>
    <property type="evidence" value="ECO:0007669"/>
    <property type="project" value="UniProtKB-UniRule"/>
</dbReference>
<dbReference type="GO" id="GO:0003735">
    <property type="term" value="F:structural constituent of ribosome"/>
    <property type="evidence" value="ECO:0007669"/>
    <property type="project" value="InterPro"/>
</dbReference>
<dbReference type="GO" id="GO:0006412">
    <property type="term" value="P:translation"/>
    <property type="evidence" value="ECO:0007669"/>
    <property type="project" value="UniProtKB-UniRule"/>
</dbReference>
<dbReference type="FunFam" id="3.30.420.80:FF:000010">
    <property type="entry name" value="30S ribosomal protein S11"/>
    <property type="match status" value="1"/>
</dbReference>
<dbReference type="Gene3D" id="3.30.420.80">
    <property type="entry name" value="Ribosomal protein S11"/>
    <property type="match status" value="1"/>
</dbReference>
<dbReference type="HAMAP" id="MF_01310">
    <property type="entry name" value="Ribosomal_uS11"/>
    <property type="match status" value="1"/>
</dbReference>
<dbReference type="InterPro" id="IPR001971">
    <property type="entry name" value="Ribosomal_uS11"/>
</dbReference>
<dbReference type="InterPro" id="IPR019981">
    <property type="entry name" value="Ribosomal_uS11_bac-type"/>
</dbReference>
<dbReference type="InterPro" id="IPR018102">
    <property type="entry name" value="Ribosomal_uS11_CS"/>
</dbReference>
<dbReference type="InterPro" id="IPR036967">
    <property type="entry name" value="Ribosomal_uS11_sf"/>
</dbReference>
<dbReference type="NCBIfam" id="NF003698">
    <property type="entry name" value="PRK05309.1"/>
    <property type="match status" value="1"/>
</dbReference>
<dbReference type="NCBIfam" id="TIGR03632">
    <property type="entry name" value="uS11_bact"/>
    <property type="match status" value="1"/>
</dbReference>
<dbReference type="PANTHER" id="PTHR11759">
    <property type="entry name" value="40S RIBOSOMAL PROTEIN S14/30S RIBOSOMAL PROTEIN S11"/>
    <property type="match status" value="1"/>
</dbReference>
<dbReference type="Pfam" id="PF00411">
    <property type="entry name" value="Ribosomal_S11"/>
    <property type="match status" value="1"/>
</dbReference>
<dbReference type="PIRSF" id="PIRSF002131">
    <property type="entry name" value="Ribosomal_S11"/>
    <property type="match status" value="1"/>
</dbReference>
<dbReference type="SUPFAM" id="SSF53137">
    <property type="entry name" value="Translational machinery components"/>
    <property type="match status" value="1"/>
</dbReference>
<dbReference type="PROSITE" id="PS00054">
    <property type="entry name" value="RIBOSOMAL_S11"/>
    <property type="match status" value="1"/>
</dbReference>
<name>RS11_BORBZ</name>